<organism>
    <name type="scientific">Macaca fascicularis</name>
    <name type="common">Crab-eating macaque</name>
    <name type="synonym">Cynomolgus monkey</name>
    <dbReference type="NCBI Taxonomy" id="9541"/>
    <lineage>
        <taxon>Eukaryota</taxon>
        <taxon>Metazoa</taxon>
        <taxon>Chordata</taxon>
        <taxon>Craniata</taxon>
        <taxon>Vertebrata</taxon>
        <taxon>Euteleostomi</taxon>
        <taxon>Mammalia</taxon>
        <taxon>Eutheria</taxon>
        <taxon>Euarchontoglires</taxon>
        <taxon>Primates</taxon>
        <taxon>Haplorrhini</taxon>
        <taxon>Catarrhini</taxon>
        <taxon>Cercopithecidae</taxon>
        <taxon>Cercopithecinae</taxon>
        <taxon>Macaca</taxon>
    </lineage>
</organism>
<proteinExistence type="evidence at transcript level"/>
<comment type="function">
    <text evidence="2 3">E3 ubiquitin-protein ligase that promotes the ubiquitination and proteasomal degradation of SIN3B (By similarity). Independently of its E3 ligase activity, acts as a CTNNB1 stabilizer through USP7-mediated deubiquitination of CTNNB1 and promotes Wnt signaling (By similarity). Plays a critical role in the regulation of nuclear lamina.</text>
</comment>
<comment type="catalytic activity">
    <reaction>
        <text>S-ubiquitinyl-[E2 ubiquitin-conjugating enzyme]-L-cysteine + [acceptor protein]-L-lysine = [E2 ubiquitin-conjugating enzyme]-L-cysteine + N(6)-ubiquitinyl-[acceptor protein]-L-lysine.</text>
        <dbReference type="EC" id="2.3.2.27"/>
    </reaction>
</comment>
<comment type="pathway">
    <text>Protein modification; protein ubiquitination.</text>
</comment>
<comment type="subunit">
    <text evidence="2 3">Interacts with SIN3B (By similarity). Interacts with CTNNB1 (via Armadillo repeats 2-8) (By similarity). Interacts with USP7 (via MATH domain) (By similarity).</text>
</comment>
<comment type="subcellular location">
    <subcellularLocation>
        <location evidence="2">Cytoplasm</location>
    </subcellularLocation>
    <subcellularLocation>
        <location evidence="2">Nucleus</location>
    </subcellularLocation>
</comment>
<comment type="PTM">
    <text evidence="1">Auto-ubiquitinated; leads to proteasomal degradation.</text>
</comment>
<feature type="chain" id="PRO_0000277658" description="E3 ubiquitin-protein ligase RNF220">
    <location>
        <begin position="1"/>
        <end position="566"/>
    </location>
</feature>
<feature type="zinc finger region" description="RING-type" evidence="5">
    <location>
        <begin position="514"/>
        <end position="553"/>
    </location>
</feature>
<feature type="region of interest" description="Disordered" evidence="6">
    <location>
        <begin position="277"/>
        <end position="297"/>
    </location>
</feature>
<feature type="region of interest" description="Required for targeting to the cytoplasm" evidence="1">
    <location>
        <begin position="514"/>
        <end position="522"/>
    </location>
</feature>
<feature type="coiled-coil region" evidence="4">
    <location>
        <begin position="485"/>
        <end position="513"/>
    </location>
</feature>
<feature type="modified residue" description="Phosphoserine" evidence="2">
    <location>
        <position position="390"/>
    </location>
</feature>
<feature type="cross-link" description="Glycyl lysine isopeptide (Lys-Gly) (interchain with G-Cter in SUMO2)" evidence="2">
    <location>
        <position position="277"/>
    </location>
</feature>
<dbReference type="EC" id="2.3.2.27"/>
<dbReference type="EMBL" id="AB093655">
    <property type="protein sequence ID" value="BAC21629.1"/>
    <property type="molecule type" value="mRNA"/>
</dbReference>
<dbReference type="STRING" id="9541.ENSMFAP00000042886"/>
<dbReference type="eggNOG" id="ENOG502QR1N">
    <property type="taxonomic scope" value="Eukaryota"/>
</dbReference>
<dbReference type="UniPathway" id="UPA00143"/>
<dbReference type="Proteomes" id="UP000233100">
    <property type="component" value="Unplaced"/>
</dbReference>
<dbReference type="GO" id="GO:0005737">
    <property type="term" value="C:cytoplasm"/>
    <property type="evidence" value="ECO:0000250"/>
    <property type="project" value="UniProtKB"/>
</dbReference>
<dbReference type="GO" id="GO:0005652">
    <property type="term" value="C:nuclear lamina"/>
    <property type="evidence" value="ECO:0000250"/>
    <property type="project" value="UniProtKB"/>
</dbReference>
<dbReference type="GO" id="GO:0005634">
    <property type="term" value="C:nucleus"/>
    <property type="evidence" value="ECO:0000250"/>
    <property type="project" value="UniProtKB"/>
</dbReference>
<dbReference type="GO" id="GO:0008013">
    <property type="term" value="F:beta-catenin binding"/>
    <property type="evidence" value="ECO:0000250"/>
    <property type="project" value="UniProtKB"/>
</dbReference>
<dbReference type="GO" id="GO:0061630">
    <property type="term" value="F:ubiquitin protein ligase activity"/>
    <property type="evidence" value="ECO:0007669"/>
    <property type="project" value="TreeGrafter"/>
</dbReference>
<dbReference type="GO" id="GO:0004842">
    <property type="term" value="F:ubiquitin-protein transferase activity"/>
    <property type="evidence" value="ECO:0000250"/>
    <property type="project" value="UniProtKB"/>
</dbReference>
<dbReference type="GO" id="GO:0008270">
    <property type="term" value="F:zinc ion binding"/>
    <property type="evidence" value="ECO:0007669"/>
    <property type="project" value="UniProtKB-KW"/>
</dbReference>
<dbReference type="GO" id="GO:0090263">
    <property type="term" value="P:positive regulation of canonical Wnt signaling pathway"/>
    <property type="evidence" value="ECO:0000250"/>
    <property type="project" value="UniProtKB"/>
</dbReference>
<dbReference type="GO" id="GO:0051865">
    <property type="term" value="P:protein autoubiquitination"/>
    <property type="evidence" value="ECO:0000250"/>
    <property type="project" value="UniProtKB"/>
</dbReference>
<dbReference type="GO" id="GO:0016567">
    <property type="term" value="P:protein ubiquitination"/>
    <property type="evidence" value="ECO:0000250"/>
    <property type="project" value="UniProtKB"/>
</dbReference>
<dbReference type="CDD" id="cd16563">
    <property type="entry name" value="RING-HC_RNF220"/>
    <property type="match status" value="1"/>
</dbReference>
<dbReference type="FunFam" id="3.30.40.10:FF:000195">
    <property type="entry name" value="E3 ubiquitin-protein ligase RNF220"/>
    <property type="match status" value="1"/>
</dbReference>
<dbReference type="Gene3D" id="3.30.40.10">
    <property type="entry name" value="Zinc/RING finger domain, C3HC4 (zinc finger)"/>
    <property type="match status" value="1"/>
</dbReference>
<dbReference type="InterPro" id="IPR052443">
    <property type="entry name" value="E3_ubiq-ligase_RNF220-like"/>
</dbReference>
<dbReference type="InterPro" id="IPR031824">
    <property type="entry name" value="RNF220_mid"/>
</dbReference>
<dbReference type="InterPro" id="IPR040178">
    <property type="entry name" value="RNF220_RING"/>
</dbReference>
<dbReference type="InterPro" id="IPR001841">
    <property type="entry name" value="Znf_RING"/>
</dbReference>
<dbReference type="InterPro" id="IPR013083">
    <property type="entry name" value="Znf_RING/FYVE/PHD"/>
</dbReference>
<dbReference type="PANTHER" id="PTHR13459:SF3">
    <property type="entry name" value="E3 UBIQUITIN-PROTEIN LIGASE RNF220"/>
    <property type="match status" value="1"/>
</dbReference>
<dbReference type="PANTHER" id="PTHR13459">
    <property type="entry name" value="E3 UBIQUITIN-PROTEIN LIGASE RNF220 ISOFORM X1"/>
    <property type="match status" value="1"/>
</dbReference>
<dbReference type="Pfam" id="PF15926">
    <property type="entry name" value="RNF220"/>
    <property type="match status" value="2"/>
</dbReference>
<dbReference type="Pfam" id="PF13923">
    <property type="entry name" value="zf-C3HC4_2"/>
    <property type="match status" value="1"/>
</dbReference>
<dbReference type="SUPFAM" id="SSF57850">
    <property type="entry name" value="RING/U-box"/>
    <property type="match status" value="1"/>
</dbReference>
<dbReference type="PROSITE" id="PS50089">
    <property type="entry name" value="ZF_RING_2"/>
    <property type="match status" value="1"/>
</dbReference>
<sequence>MDLHRAAFKMENSSYLPNPLASPALMVLASTAEASRDASIPCQQPRPFGVPVSVDKDVHIPFTNGSYTFASMYHRQGGVPGTFANRDFPPSLLHLHPQFAPPNLDCTPISMLNHSGVGAFRPFASTEDRESYQSAFTPAKRLKNCHDTESPHLRFSDADGKEYDFGTQLPSSSPGSLKVDDTGKKIFAVSGLISDREASSSPEDRNDRCKKKAAALFDSQAPICPICQVLLRPSELQEHMEQELEQLAQLPSSKNSLLKDAMAPGTPKSLLLSASIKREGESPTASPHSSATDDLHHSDRYQTFLRVRANRQTRLNARIGKMKRRKQDEGQREGSCMAEDDAVDIEHENNNRFEEYGWCGQKRIRATTLLEGGFRGSGFIMCSGKENPDSDADLDVDGDDTLEYGKPQYTEADVIPCTGEEPGEAKEREALRGAVLNGGPPSTRITPEFSKWANDEMPSTSNGESSKQEAMQKTCKNSDIEKITEDSAVTTFEALKARVRELERQLSRGDRYKCLICMDSYSMPLTSIQCWHVHCEECWLRTLGAKKLCPQCNTITAPGDLRRIYL</sequence>
<gene>
    <name type="primary">RNF220</name>
    <name type="ORF">QflA-23520</name>
</gene>
<reference key="1">
    <citation type="submission" date="2002-10" db="EMBL/GenBank/DDBJ databases">
        <authorList>
            <person name="Hashimoto K."/>
            <person name="Osada N."/>
            <person name="Hida M."/>
            <person name="Kusuda J."/>
            <person name="Sugano S."/>
        </authorList>
    </citation>
    <scope>NUCLEOTIDE SEQUENCE [LARGE SCALE MRNA]</scope>
    <source>
        <tissue>Frontal cortex</tissue>
    </source>
</reference>
<evidence type="ECO:0000250" key="1"/>
<evidence type="ECO:0000250" key="2">
    <source>
        <dbReference type="UniProtKB" id="Q5VTB9"/>
    </source>
</evidence>
<evidence type="ECO:0000250" key="3">
    <source>
        <dbReference type="UniProtKB" id="Q6PDX6"/>
    </source>
</evidence>
<evidence type="ECO:0000255" key="4"/>
<evidence type="ECO:0000255" key="5">
    <source>
        <dbReference type="PROSITE-ProRule" id="PRU00175"/>
    </source>
</evidence>
<evidence type="ECO:0000256" key="6">
    <source>
        <dbReference type="SAM" id="MobiDB-lite"/>
    </source>
</evidence>
<evidence type="ECO:0000305" key="7"/>
<protein>
    <recommendedName>
        <fullName>E3 ubiquitin-protein ligase RNF220</fullName>
        <ecNumber>2.3.2.27</ecNumber>
    </recommendedName>
    <alternativeName>
        <fullName>RING finger protein 220</fullName>
    </alternativeName>
    <alternativeName>
        <fullName evidence="7">RING-type E3 ubiquitin transferase RNF220</fullName>
    </alternativeName>
</protein>
<name>RN220_MACFA</name>
<keyword id="KW-0175">Coiled coil</keyword>
<keyword id="KW-0963">Cytoplasm</keyword>
<keyword id="KW-1017">Isopeptide bond</keyword>
<keyword id="KW-0479">Metal-binding</keyword>
<keyword id="KW-0539">Nucleus</keyword>
<keyword id="KW-0597">Phosphoprotein</keyword>
<keyword id="KW-1185">Reference proteome</keyword>
<keyword id="KW-0808">Transferase</keyword>
<keyword id="KW-0832">Ubl conjugation</keyword>
<keyword id="KW-0833">Ubl conjugation pathway</keyword>
<keyword id="KW-0862">Zinc</keyword>
<keyword id="KW-0863">Zinc-finger</keyword>
<accession>Q8HXD5</accession>